<reference evidence="7" key="1">
    <citation type="journal article" date="2000" name="Nat. Cell Biol.">
        <title>New neuropeptides containing carboxy-terminal RFamide and their receptor in mammals.</title>
        <authorList>
            <person name="Hinuma S."/>
            <person name="Shintani Y."/>
            <person name="Fukusumi S."/>
            <person name="Iijima N."/>
            <person name="Matsumoto Y."/>
            <person name="Hosoya M."/>
            <person name="Fujii R."/>
            <person name="Watanabe T."/>
            <person name="Kikuchi K."/>
            <person name="Terao Y."/>
            <person name="Yano T."/>
            <person name="Yamamoto T."/>
            <person name="Kawamata Y."/>
            <person name="Habata Y."/>
            <person name="Asada M."/>
            <person name="Kitada C."/>
            <person name="Kurokawa T."/>
            <person name="Onda H."/>
            <person name="Nishimura O."/>
            <person name="Tanaka M."/>
            <person name="Ibata Y."/>
            <person name="Fujino M."/>
        </authorList>
    </citation>
    <scope>NUCLEOTIDE SEQUENCE [MRNA]</scope>
    <source>
        <tissue>Hypothalamus</tissue>
    </source>
</reference>
<reference evidence="7" key="2">
    <citation type="journal article" date="2001" name="Biochim. Biophys. Acta">
        <title>Characteristics and distribution of endogenous RFamide-related peptide-1.</title>
        <authorList>
            <person name="Fukusumi S."/>
            <person name="Habata Y."/>
            <person name="Yoshida H."/>
            <person name="Iijima N."/>
            <person name="Kawamata Y."/>
            <person name="Hosoya M."/>
            <person name="Fujii R."/>
            <person name="Hinuma S."/>
            <person name="Kitada C."/>
            <person name="Shintani Y."/>
            <person name="Suenaga M."/>
            <person name="Onda H."/>
            <person name="Nishimura O."/>
            <person name="Tanaka M."/>
            <person name="Ibata Y."/>
            <person name="Fujino M."/>
        </authorList>
    </citation>
    <scope>PROTEIN SEQUENCE OF 58-92</scope>
    <scope>MASS SPECTROMETRY</scope>
    <source>
        <tissue>Hypothalamus</tissue>
    </source>
</reference>
<feature type="signal peptide" evidence="4 6">
    <location>
        <begin position="1"/>
        <end position="21"/>
    </location>
</feature>
<feature type="propeptide" id="PRO_0000009913" evidence="5">
    <location>
        <begin position="22"/>
        <end position="57"/>
    </location>
</feature>
<feature type="peptide" id="PRO_0000009914" description="Neuropeptide NPSF">
    <location>
        <begin position="58"/>
        <end position="92"/>
    </location>
</feature>
<feature type="peptide" id="PRO_0000401170" description="Neuropeptide RFRP-1" evidence="4">
    <location>
        <begin position="81"/>
        <end position="92"/>
    </location>
</feature>
<feature type="propeptide" id="PRO_0000009915">
    <location>
        <begin position="95"/>
        <end position="99"/>
    </location>
</feature>
<feature type="peptide" id="PRO_0000009916" description="Neuropeptide RFRP-2" evidence="4">
    <location>
        <begin position="101"/>
        <end position="112"/>
    </location>
</feature>
<feature type="propeptide" id="PRO_0000009917">
    <location>
        <begin position="115"/>
        <end position="121"/>
    </location>
</feature>
<feature type="peptide" id="PRO_0000009918" description="Neuropeptide NPVF" evidence="1">
    <location>
        <begin position="123"/>
        <end position="131"/>
    </location>
</feature>
<feature type="propeptide" id="PRO_0000009919">
    <location>
        <begin position="134"/>
        <end position="196"/>
    </location>
</feature>
<feature type="modified residue" description="Phenylalanine amide" evidence="1">
    <location>
        <position position="92"/>
    </location>
</feature>
<feature type="modified residue" description="Phenylalanine amide" evidence="1">
    <location>
        <position position="131"/>
    </location>
</feature>
<protein>
    <recommendedName>
        <fullName>Pro-FMRFamide-related neuropeptide VF</fullName>
    </recommendedName>
    <alternativeName>
        <fullName>FMRFamide-related peptides</fullName>
    </alternativeName>
    <component>
        <recommendedName>
            <fullName>Neuropeptide NPSF</fullName>
        </recommendedName>
    </component>
    <component>
        <recommendedName>
            <fullName>Neuropeptide RFRP-1</fullName>
        </recommendedName>
    </component>
    <component>
        <recommendedName>
            <fullName>Neuropeptide RFRP-2</fullName>
        </recommendedName>
    </component>
    <component>
        <recommendedName>
            <fullName>Neuropeptide NPVF</fullName>
        </recommendedName>
        <alternativeName>
            <fullName>Neuropeptide RFRP-3</fullName>
        </alternativeName>
    </component>
</protein>
<gene>
    <name type="primary">NPVF</name>
    <name type="synonym">RFRP</name>
</gene>
<dbReference type="EMBL" id="AB040291">
    <property type="protein sequence ID" value="BAB17675.1"/>
    <property type="molecule type" value="mRNA"/>
</dbReference>
<dbReference type="RefSeq" id="NP_776593.1">
    <property type="nucleotide sequence ID" value="NM_174168.1"/>
</dbReference>
<dbReference type="FunCoup" id="Q9GM96">
    <property type="interactions" value="43"/>
</dbReference>
<dbReference type="STRING" id="9913.ENSBTAP00000025902"/>
<dbReference type="PaxDb" id="9913-ENSBTAP00000025902"/>
<dbReference type="Ensembl" id="ENSBTAT00000025902.4">
    <property type="protein sequence ID" value="ENSBTAP00000025902.2"/>
    <property type="gene ID" value="ENSBTAG00000019447.4"/>
</dbReference>
<dbReference type="GeneID" id="281451"/>
<dbReference type="KEGG" id="bta:281451"/>
<dbReference type="CTD" id="64111"/>
<dbReference type="VEuPathDB" id="HostDB:ENSBTAG00000019447"/>
<dbReference type="VGNC" id="VGNC:32221">
    <property type="gene designation" value="NPVF"/>
</dbReference>
<dbReference type="eggNOG" id="ENOG502S5H9">
    <property type="taxonomic scope" value="Eukaryota"/>
</dbReference>
<dbReference type="GeneTree" id="ENSGT00390000003271"/>
<dbReference type="HOGENOM" id="CLU_120051_0_0_1"/>
<dbReference type="InParanoid" id="Q9GM96"/>
<dbReference type="OMA" id="KMPHSVA"/>
<dbReference type="OrthoDB" id="8834619at2759"/>
<dbReference type="TreeFam" id="TF330935"/>
<dbReference type="Proteomes" id="UP000009136">
    <property type="component" value="Chromosome 4"/>
</dbReference>
<dbReference type="Bgee" id="ENSBTAG00000019447">
    <property type="expression patterns" value="Expressed in Ammon's horn and 17 other cell types or tissues"/>
</dbReference>
<dbReference type="GO" id="GO:0005615">
    <property type="term" value="C:extracellular space"/>
    <property type="evidence" value="ECO:0007669"/>
    <property type="project" value="Ensembl"/>
</dbReference>
<dbReference type="GO" id="GO:0160041">
    <property type="term" value="F:neuropeptide activity"/>
    <property type="evidence" value="ECO:0007669"/>
    <property type="project" value="Ensembl"/>
</dbReference>
<dbReference type="GO" id="GO:0005102">
    <property type="term" value="F:signaling receptor binding"/>
    <property type="evidence" value="ECO:0000318"/>
    <property type="project" value="GO_Central"/>
</dbReference>
<dbReference type="GO" id="GO:0032277">
    <property type="term" value="P:negative regulation of gonadotropin secretion"/>
    <property type="evidence" value="ECO:0000318"/>
    <property type="project" value="GO_Central"/>
</dbReference>
<dbReference type="GO" id="GO:0007218">
    <property type="term" value="P:neuropeptide signaling pathway"/>
    <property type="evidence" value="ECO:0000318"/>
    <property type="project" value="GO_Central"/>
</dbReference>
<dbReference type="InterPro" id="IPR026297">
    <property type="entry name" value="FMRFamide-related/fGRP"/>
</dbReference>
<dbReference type="PANTHER" id="PTHR14403:SF6">
    <property type="entry name" value="PRO-FMRFAMIDE-RELATED NEUROPEPTIDE VF"/>
    <property type="match status" value="1"/>
</dbReference>
<dbReference type="PANTHER" id="PTHR14403">
    <property type="entry name" value="RFAMIDE PEPTIDE GONADOTROPIN INHIBITORY HORMONE"/>
    <property type="match status" value="1"/>
</dbReference>
<comment type="function">
    <molecule>Neuropeptide RFRP-1</molecule>
    <text evidence="2 3">Efficiently inhibits forskolin-induced production of cAMP. Acts as a potent negative regulator of gonadotropin synthesis and secretion (By similarity). Induces secretion of prolactin (By similarity).</text>
</comment>
<comment type="function">
    <molecule>Neuropeptide NPVF</molecule>
    <text evidence="3">Efficiently inhibits forskolin-induced production of cAMP. Blocks morphine-induced analgesia.</text>
</comment>
<comment type="function">
    <molecule>Neuropeptide RFRP-2</molecule>
    <text evidence="3">Shows no inhibitory activity of forskolin-induced production of cAMP.</text>
</comment>
<comment type="subcellular location">
    <subcellularLocation>
        <location evidence="3">Secreted</location>
    </subcellularLocation>
</comment>
<comment type="mass spectrometry" mass="3996.8" error="0.6" method="Electrospray" evidence="5">
    <molecule>Neuropeptide NPSF</molecule>
</comment>
<comment type="similarity">
    <text evidence="7">Belongs to the FARP (FMRFamide related peptide) family.</text>
</comment>
<accession>Q9GM96</accession>
<evidence type="ECO:0000250" key="1"/>
<evidence type="ECO:0000250" key="2">
    <source>
        <dbReference type="UniProtKB" id="Q9ESQ9"/>
    </source>
</evidence>
<evidence type="ECO:0000250" key="3">
    <source>
        <dbReference type="UniProtKB" id="Q9HCQ7"/>
    </source>
</evidence>
<evidence type="ECO:0000255" key="4"/>
<evidence type="ECO:0000269" key="5">
    <source>
    </source>
</evidence>
<evidence type="ECO:0000303" key="6">
    <source>
    </source>
</evidence>
<evidence type="ECO:0000305" key="7"/>
<evidence type="ECO:0000312" key="8">
    <source>
        <dbReference type="EMBL" id="BAB17675.1"/>
    </source>
</evidence>
<name>NPVF_BOVIN</name>
<sequence length="196" mass="22644">MEIISLKRFILLMLATSSLLTSNIFCTDESRMPNLYSKKNYDKYSEPRGDLGWEKERSLTFEEVKDWAPKIKMNKPVVNKMPPSAANLPLRFGRNMEEERSTRAMAHLPLRLGKNREDSLSRWVPNLPQRFGRTTTAKSITKTLSNLLQQSMHSPSTNGLLYSMACQPQEIQNPGQKNLRRRGFQKIDDAELKQEK</sequence>
<proteinExistence type="evidence at protein level"/>
<organism evidence="8">
    <name type="scientific">Bos taurus</name>
    <name type="common">Bovine</name>
    <dbReference type="NCBI Taxonomy" id="9913"/>
    <lineage>
        <taxon>Eukaryota</taxon>
        <taxon>Metazoa</taxon>
        <taxon>Chordata</taxon>
        <taxon>Craniata</taxon>
        <taxon>Vertebrata</taxon>
        <taxon>Euteleostomi</taxon>
        <taxon>Mammalia</taxon>
        <taxon>Eutheria</taxon>
        <taxon>Laurasiatheria</taxon>
        <taxon>Artiodactyla</taxon>
        <taxon>Ruminantia</taxon>
        <taxon>Pecora</taxon>
        <taxon>Bovidae</taxon>
        <taxon>Bovinae</taxon>
        <taxon>Bos</taxon>
    </lineage>
</organism>
<keyword id="KW-0027">Amidation</keyword>
<keyword id="KW-0165">Cleavage on pair of basic residues</keyword>
<keyword id="KW-0903">Direct protein sequencing</keyword>
<keyword id="KW-0527">Neuropeptide</keyword>
<keyword id="KW-1185">Reference proteome</keyword>
<keyword id="KW-0964">Secreted</keyword>
<keyword id="KW-0732">Signal</keyword>